<keyword id="KW-0285">Flavoprotein</keyword>
<keyword id="KW-0288">FMN</keyword>
<keyword id="KW-0560">Oxidoreductase</keyword>
<keyword id="KW-0664">Pyridoxine biosynthesis</keyword>
<organism>
    <name type="scientific">Paracidovorax citrulli (strain AAC00-1)</name>
    <name type="common">Acidovorax citrulli</name>
    <dbReference type="NCBI Taxonomy" id="397945"/>
    <lineage>
        <taxon>Bacteria</taxon>
        <taxon>Pseudomonadati</taxon>
        <taxon>Pseudomonadota</taxon>
        <taxon>Betaproteobacteria</taxon>
        <taxon>Burkholderiales</taxon>
        <taxon>Comamonadaceae</taxon>
        <taxon>Paracidovorax</taxon>
    </lineage>
</organism>
<comment type="function">
    <text evidence="1">Catalyzes the oxidation of either pyridoxine 5'-phosphate (PNP) or pyridoxamine 5'-phosphate (PMP) into pyridoxal 5'-phosphate (PLP).</text>
</comment>
<comment type="catalytic activity">
    <reaction evidence="1">
        <text>pyridoxamine 5'-phosphate + O2 + H2O = pyridoxal 5'-phosphate + H2O2 + NH4(+)</text>
        <dbReference type="Rhea" id="RHEA:15817"/>
        <dbReference type="ChEBI" id="CHEBI:15377"/>
        <dbReference type="ChEBI" id="CHEBI:15379"/>
        <dbReference type="ChEBI" id="CHEBI:16240"/>
        <dbReference type="ChEBI" id="CHEBI:28938"/>
        <dbReference type="ChEBI" id="CHEBI:58451"/>
        <dbReference type="ChEBI" id="CHEBI:597326"/>
        <dbReference type="EC" id="1.4.3.5"/>
    </reaction>
</comment>
<comment type="catalytic activity">
    <reaction evidence="1">
        <text>pyridoxine 5'-phosphate + O2 = pyridoxal 5'-phosphate + H2O2</text>
        <dbReference type="Rhea" id="RHEA:15149"/>
        <dbReference type="ChEBI" id="CHEBI:15379"/>
        <dbReference type="ChEBI" id="CHEBI:16240"/>
        <dbReference type="ChEBI" id="CHEBI:58589"/>
        <dbReference type="ChEBI" id="CHEBI:597326"/>
        <dbReference type="EC" id="1.4.3.5"/>
    </reaction>
</comment>
<comment type="cofactor">
    <cofactor evidence="1">
        <name>FMN</name>
        <dbReference type="ChEBI" id="CHEBI:58210"/>
    </cofactor>
    <text evidence="1">Binds 1 FMN per subunit.</text>
</comment>
<comment type="pathway">
    <text evidence="1">Cofactor metabolism; pyridoxal 5'-phosphate salvage; pyridoxal 5'-phosphate from pyridoxamine 5'-phosphate: step 1/1.</text>
</comment>
<comment type="pathway">
    <text evidence="1">Cofactor metabolism; pyridoxal 5'-phosphate salvage; pyridoxal 5'-phosphate from pyridoxine 5'-phosphate: step 1/1.</text>
</comment>
<comment type="subunit">
    <text evidence="1">Homodimer.</text>
</comment>
<comment type="similarity">
    <text evidence="1">Belongs to the pyridoxamine 5'-phosphate oxidase family.</text>
</comment>
<accession>A1TQY3</accession>
<sequence>MHNRGMSSPSSPLSSSIADLRKSYERAELGEEASHADPLRQFDQWLQEAVAAQVPEPNAMTLATVGADLRPSTRVVLIKGYDERGIVWYTNYGSRKGRQLAGNPFAALQFHWVELERVVRIEGRVEKVSDAESDAYFASRPLDSRIGAWASPQSEVISGRGVLVANAAKYGAQFLLQPLRPPHWGGFRLKPDRWEFWQGRKSRLHDRLCYREETPGAWVRERLAP</sequence>
<evidence type="ECO:0000255" key="1">
    <source>
        <dbReference type="HAMAP-Rule" id="MF_01629"/>
    </source>
</evidence>
<name>PDXH_PARC0</name>
<protein>
    <recommendedName>
        <fullName evidence="1">Pyridoxine/pyridoxamine 5'-phosphate oxidase</fullName>
        <ecNumber evidence="1">1.4.3.5</ecNumber>
    </recommendedName>
    <alternativeName>
        <fullName evidence="1">PNP/PMP oxidase</fullName>
        <shortName evidence="1">PNPOx</shortName>
    </alternativeName>
    <alternativeName>
        <fullName evidence="1">Pyridoxal 5'-phosphate synthase</fullName>
    </alternativeName>
</protein>
<feature type="chain" id="PRO_0000292282" description="Pyridoxine/pyridoxamine 5'-phosphate oxidase">
    <location>
        <begin position="1"/>
        <end position="225"/>
    </location>
</feature>
<feature type="binding site" evidence="1">
    <location>
        <begin position="21"/>
        <end position="24"/>
    </location>
    <ligand>
        <name>substrate</name>
    </ligand>
</feature>
<feature type="binding site" evidence="1">
    <location>
        <begin position="74"/>
        <end position="79"/>
    </location>
    <ligand>
        <name>FMN</name>
        <dbReference type="ChEBI" id="CHEBI:58210"/>
    </ligand>
</feature>
<feature type="binding site" evidence="1">
    <location>
        <position position="79"/>
    </location>
    <ligand>
        <name>substrate</name>
    </ligand>
</feature>
<feature type="binding site" evidence="1">
    <location>
        <begin position="89"/>
        <end position="90"/>
    </location>
    <ligand>
        <name>FMN</name>
        <dbReference type="ChEBI" id="CHEBI:58210"/>
    </ligand>
</feature>
<feature type="binding site" evidence="1">
    <location>
        <position position="95"/>
    </location>
    <ligand>
        <name>FMN</name>
        <dbReference type="ChEBI" id="CHEBI:58210"/>
    </ligand>
</feature>
<feature type="binding site" evidence="1">
    <location>
        <position position="96"/>
    </location>
    <ligand>
        <name>FMN</name>
        <dbReference type="ChEBI" id="CHEBI:58210"/>
    </ligand>
</feature>
<feature type="binding site" evidence="1">
    <location>
        <position position="136"/>
    </location>
    <ligand>
        <name>substrate</name>
    </ligand>
</feature>
<feature type="binding site" evidence="1">
    <location>
        <position position="140"/>
    </location>
    <ligand>
        <name>substrate</name>
    </ligand>
</feature>
<feature type="binding site" evidence="1">
    <location>
        <position position="144"/>
    </location>
    <ligand>
        <name>substrate</name>
    </ligand>
</feature>
<feature type="binding site" evidence="1">
    <location>
        <begin position="153"/>
        <end position="154"/>
    </location>
    <ligand>
        <name>FMN</name>
        <dbReference type="ChEBI" id="CHEBI:58210"/>
    </ligand>
</feature>
<feature type="binding site" evidence="1">
    <location>
        <position position="197"/>
    </location>
    <ligand>
        <name>FMN</name>
        <dbReference type="ChEBI" id="CHEBI:58210"/>
    </ligand>
</feature>
<feature type="binding site" evidence="1">
    <location>
        <begin position="203"/>
        <end position="205"/>
    </location>
    <ligand>
        <name>substrate</name>
    </ligand>
</feature>
<feature type="binding site" evidence="1">
    <location>
        <position position="207"/>
    </location>
    <ligand>
        <name>FMN</name>
        <dbReference type="ChEBI" id="CHEBI:58210"/>
    </ligand>
</feature>
<proteinExistence type="inferred from homology"/>
<dbReference type="EC" id="1.4.3.5" evidence="1"/>
<dbReference type="EMBL" id="CP000512">
    <property type="protein sequence ID" value="ABM33371.1"/>
    <property type="molecule type" value="Genomic_DNA"/>
</dbReference>
<dbReference type="RefSeq" id="WP_011795892.1">
    <property type="nucleotide sequence ID" value="NC_008752.1"/>
</dbReference>
<dbReference type="SMR" id="A1TQY3"/>
<dbReference type="STRING" id="397945.Aave_2803"/>
<dbReference type="KEGG" id="aav:Aave_2803"/>
<dbReference type="eggNOG" id="COG0259">
    <property type="taxonomic scope" value="Bacteria"/>
</dbReference>
<dbReference type="HOGENOM" id="CLU_032263_2_2_4"/>
<dbReference type="OrthoDB" id="9780392at2"/>
<dbReference type="UniPathway" id="UPA01068">
    <property type="reaction ID" value="UER00304"/>
</dbReference>
<dbReference type="UniPathway" id="UPA01068">
    <property type="reaction ID" value="UER00305"/>
</dbReference>
<dbReference type="Proteomes" id="UP000002596">
    <property type="component" value="Chromosome"/>
</dbReference>
<dbReference type="GO" id="GO:0010181">
    <property type="term" value="F:FMN binding"/>
    <property type="evidence" value="ECO:0007669"/>
    <property type="project" value="UniProtKB-UniRule"/>
</dbReference>
<dbReference type="GO" id="GO:0004733">
    <property type="term" value="F:pyridoxamine phosphate oxidase activity"/>
    <property type="evidence" value="ECO:0007669"/>
    <property type="project" value="UniProtKB-UniRule"/>
</dbReference>
<dbReference type="GO" id="GO:0008615">
    <property type="term" value="P:pyridoxine biosynthetic process"/>
    <property type="evidence" value="ECO:0007669"/>
    <property type="project" value="UniProtKB-KW"/>
</dbReference>
<dbReference type="Gene3D" id="2.30.110.10">
    <property type="entry name" value="Electron Transport, Fmn-binding Protein, Chain A"/>
    <property type="match status" value="1"/>
</dbReference>
<dbReference type="HAMAP" id="MF_01629">
    <property type="entry name" value="PdxH"/>
    <property type="match status" value="1"/>
</dbReference>
<dbReference type="InterPro" id="IPR000659">
    <property type="entry name" value="Pyridox_Oxase"/>
</dbReference>
<dbReference type="InterPro" id="IPR019740">
    <property type="entry name" value="Pyridox_Oxase_CS"/>
</dbReference>
<dbReference type="InterPro" id="IPR011576">
    <property type="entry name" value="Pyridox_Oxase_N"/>
</dbReference>
<dbReference type="InterPro" id="IPR019576">
    <property type="entry name" value="Pyridoxamine_oxidase_dimer_C"/>
</dbReference>
<dbReference type="InterPro" id="IPR012349">
    <property type="entry name" value="Split_barrel_FMN-bd"/>
</dbReference>
<dbReference type="NCBIfam" id="TIGR00558">
    <property type="entry name" value="pdxH"/>
    <property type="match status" value="1"/>
</dbReference>
<dbReference type="NCBIfam" id="NF004231">
    <property type="entry name" value="PRK05679.1"/>
    <property type="match status" value="1"/>
</dbReference>
<dbReference type="PANTHER" id="PTHR10851:SF0">
    <property type="entry name" value="PYRIDOXINE-5'-PHOSPHATE OXIDASE"/>
    <property type="match status" value="1"/>
</dbReference>
<dbReference type="PANTHER" id="PTHR10851">
    <property type="entry name" value="PYRIDOXINE-5-PHOSPHATE OXIDASE"/>
    <property type="match status" value="1"/>
</dbReference>
<dbReference type="Pfam" id="PF10590">
    <property type="entry name" value="PNP_phzG_C"/>
    <property type="match status" value="1"/>
</dbReference>
<dbReference type="Pfam" id="PF01243">
    <property type="entry name" value="PNPOx_N"/>
    <property type="match status" value="1"/>
</dbReference>
<dbReference type="PIRSF" id="PIRSF000190">
    <property type="entry name" value="Pyd_amn-ph_oxd"/>
    <property type="match status" value="1"/>
</dbReference>
<dbReference type="SUPFAM" id="SSF50475">
    <property type="entry name" value="FMN-binding split barrel"/>
    <property type="match status" value="1"/>
</dbReference>
<dbReference type="PROSITE" id="PS01064">
    <property type="entry name" value="PYRIDOX_OXIDASE"/>
    <property type="match status" value="1"/>
</dbReference>
<reference key="1">
    <citation type="submission" date="2006-12" db="EMBL/GenBank/DDBJ databases">
        <title>Complete sequence of Acidovorax avenae subsp. citrulli AAC00-1.</title>
        <authorList>
            <person name="Copeland A."/>
            <person name="Lucas S."/>
            <person name="Lapidus A."/>
            <person name="Barry K."/>
            <person name="Detter J.C."/>
            <person name="Glavina del Rio T."/>
            <person name="Dalin E."/>
            <person name="Tice H."/>
            <person name="Pitluck S."/>
            <person name="Kiss H."/>
            <person name="Brettin T."/>
            <person name="Bruce D."/>
            <person name="Han C."/>
            <person name="Tapia R."/>
            <person name="Gilna P."/>
            <person name="Schmutz J."/>
            <person name="Larimer F."/>
            <person name="Land M."/>
            <person name="Hauser L."/>
            <person name="Kyrpides N."/>
            <person name="Kim E."/>
            <person name="Stahl D."/>
            <person name="Richardson P."/>
        </authorList>
    </citation>
    <scope>NUCLEOTIDE SEQUENCE [LARGE SCALE GENOMIC DNA]</scope>
    <source>
        <strain>AAC00-1</strain>
    </source>
</reference>
<gene>
    <name evidence="1" type="primary">pdxH</name>
    <name type="ordered locus">Aave_2803</name>
</gene>